<organismHost>
    <name type="scientific">Bos taurus</name>
    <name type="common">Bovine</name>
    <dbReference type="NCBI Taxonomy" id="9913"/>
</organismHost>
<feature type="chain" id="PRO_0000041030" description="Outer capsid protein VP4" evidence="1">
    <location>
        <begin position="1"/>
        <end position="776"/>
    </location>
</feature>
<feature type="chain" id="PRO_0000041031" description="Outer capsid protein VP8*" evidence="1">
    <location>
        <begin position="1"/>
        <end position="231"/>
    </location>
</feature>
<feature type="chain" id="PRO_0000041032" description="Outer capsid protein VP5*" evidence="1">
    <location>
        <begin position="247"/>
        <end position="776"/>
    </location>
</feature>
<feature type="region of interest" description="Spike head" evidence="1">
    <location>
        <begin position="65"/>
        <end position="224"/>
    </location>
</feature>
<feature type="region of interest" description="Spike body and stalk (antigen domain)" evidence="1">
    <location>
        <begin position="248"/>
        <end position="479"/>
    </location>
</feature>
<feature type="region of interest" description="Hydrophobic; possible role in virus entry into host cell" evidence="1">
    <location>
        <begin position="389"/>
        <end position="409"/>
    </location>
</feature>
<feature type="region of interest" description="Spike foot" evidence="1">
    <location>
        <begin position="510"/>
        <end position="776"/>
    </location>
</feature>
<feature type="coiled-coil region" evidence="1">
    <location>
        <begin position="484"/>
        <end position="518"/>
    </location>
</feature>
<feature type="short sequence motif" description="DGE motif; interaction with ITGA2/ITGB1 heterodimer" evidence="1">
    <location>
        <begin position="308"/>
        <end position="310"/>
    </location>
</feature>
<feature type="short sequence motif" description="YGL motif; interaction with ITGA4" evidence="1">
    <location>
        <begin position="448"/>
        <end position="450"/>
    </location>
</feature>
<feature type="short sequence motif" description="KID motif; interaction with HSPA8" evidence="1">
    <location>
        <begin position="644"/>
        <end position="646"/>
    </location>
</feature>
<feature type="site" description="Cleavage" evidence="1">
    <location>
        <begin position="231"/>
        <end position="232"/>
    </location>
</feature>
<feature type="site" description="Cleavage" evidence="1">
    <location>
        <begin position="241"/>
        <end position="242"/>
    </location>
</feature>
<feature type="site" description="Probable cleavage" evidence="1">
    <location>
        <begin position="246"/>
        <end position="247"/>
    </location>
</feature>
<feature type="disulfide bond" evidence="1">
    <location>
        <begin position="318"/>
        <end position="380"/>
    </location>
</feature>
<name>VP4_ROTBU</name>
<organism>
    <name type="scientific">Rotavirus A (strain RVA/Cow/United Kingdom/UK/1975/G6P7[5])</name>
    <name type="common">RV-A</name>
    <dbReference type="NCBI Taxonomy" id="10934"/>
    <lineage>
        <taxon>Viruses</taxon>
        <taxon>Riboviria</taxon>
        <taxon>Orthornavirae</taxon>
        <taxon>Duplornaviricota</taxon>
        <taxon>Resentoviricetes</taxon>
        <taxon>Reovirales</taxon>
        <taxon>Sedoreoviridae</taxon>
        <taxon>Rotavirus</taxon>
        <taxon>Rotavirus A</taxon>
    </lineage>
</organism>
<accession>P12474</accession>
<protein>
    <recommendedName>
        <fullName evidence="1">Outer capsid protein VP4</fullName>
    </recommendedName>
    <alternativeName>
        <fullName evidence="1">Hemagglutinin</fullName>
    </alternativeName>
    <component>
        <recommendedName>
            <fullName evidence="1">Outer capsid protein VP8*</fullName>
        </recommendedName>
    </component>
    <component>
        <recommendedName>
            <fullName evidence="1">Outer capsid protein VP5*</fullName>
        </recommendedName>
    </component>
</protein>
<sequence length="776" mass="86466">MASLIYRQLLANSYAVNLSDEIQSVGSGKNQRVTVNPGPFAQTGYAPVNWGPGEVNDSTVVQPVLDGPYQPAPFDLPVGNWMLLAPTRPGVVVEGTDNSGRWLSVILIEPGVASETRTYMMFGSSKQVVVSNVSDTKWKFVEMVKTAVDGDYAEWGTLLSDTKLYGMMKYGRRLFIYEGETPNATTKGYFITNYASAEVRPYSDFYIISRSQESACTEYINNGLPPIQNTRNVVPVAISSRSIKPREVQANEDIVVSKTSLWKEMQYNRDIIIRFKFDNSIIKSGGLGYKWAEISFKAANYQYNYMRDGEEVTAHTTCSVNGVNDFSFNGGSLPTDFAISRYEVIKENSYVYVDYWDDSQAFRNMVYVRSLAANLNDVMCSGGHYSFALPVGQWPVMKGGAVTLHTAGVTLSTQFTDFVSLNSLRFRFRLAVEEPSFTITRTRVSKLYGLPAANPNGGKEYYEVAGRFSFISLVPSNDDYQTPIMNSVTVRQDLERRLNELREEFNNLSQEIAVSQLIDLAMLPLDMFSMFSGIESTVNAAKSMATNVMRKFKSSKLASSVSMLTDSLSDAASSIARSTSVRSIGSTASAWANISEQTQDAVSEVATISSQVSQISGRLRLKEITTQTEGMNFDDISAAVLKAKIDRSIQVDQNALPDVITEASEKFIRNRAYRVIDGDEAFEAGTDGRFFAYKVETLEEMPFNMEKFADLVTNSPVISAIIDFKTLKNLNDNYGITREQAFNLLRSDPKVLRGFIDQNNPIIKNRIEQLIMQCRL</sequence>
<keyword id="KW-0167">Capsid protein</keyword>
<keyword id="KW-0175">Coiled coil</keyword>
<keyword id="KW-1015">Disulfide bond</keyword>
<keyword id="KW-0348">Hemagglutinin</keyword>
<keyword id="KW-1032">Host cell membrane</keyword>
<keyword id="KW-1035">Host cytoplasm</keyword>
<keyword id="KW-1037">Host cytoskeleton</keyword>
<keyword id="KW-1038">Host endoplasmic reticulum</keyword>
<keyword id="KW-1043">Host membrane</keyword>
<keyword id="KW-0945">Host-virus interaction</keyword>
<keyword id="KW-0472">Membrane</keyword>
<keyword id="KW-1152">Outer capsid protein</keyword>
<keyword id="KW-1161">Viral attachment to host cell</keyword>
<keyword id="KW-1162">Viral penetration into host cytoplasm</keyword>
<keyword id="KW-1173">Viral penetration via permeabilization of host membrane</keyword>
<keyword id="KW-0946">Virion</keyword>
<keyword id="KW-1160">Virus entry into host cell</keyword>
<evidence type="ECO:0000255" key="1">
    <source>
        <dbReference type="HAMAP-Rule" id="MF_04132"/>
    </source>
</evidence>
<evidence type="ECO:0000269" key="2">
    <source>
    </source>
</evidence>
<evidence type="ECO:0000303" key="3">
    <source>
    </source>
</evidence>
<reference key="1">
    <citation type="journal article" date="1988" name="Virology">
        <title>Nucleotide sequence of UK bovine rotavirus segment 4: possible host restriction of VP3 genes.</title>
        <authorList>
            <person name="Kantharidis P."/>
            <person name="Dyall-Smith M.L."/>
            <person name="Tregear G.W."/>
            <person name="Holmes I.H."/>
        </authorList>
    </citation>
    <scope>NUCLEOTIDE SEQUENCE [GENOMIC RNA]</scope>
</reference>
<reference key="2">
    <citation type="journal article" date="2002" name="J. Virol.">
        <title>Initial interaction of rotavirus strains with N-acetylneuraminic (sialic) acid residues on the cell surface correlates with VP4 genotype, not species of origin.</title>
        <authorList>
            <person name="Ciarlet M."/>
            <person name="Ludert J.E."/>
            <person name="Iturriza-Gomara M."/>
            <person name="Liprandi F."/>
            <person name="Gray J.J."/>
            <person name="Desselberger U."/>
            <person name="Estes M.K."/>
        </authorList>
    </citation>
    <scope>SIALIC ACID INDEPENDENCY</scope>
</reference>
<reference key="3">
    <citation type="journal article" date="2006" name="Glycoconj. J.">
        <title>Role of sialic acids in rotavirus infection.</title>
        <authorList>
            <person name="Isa P."/>
            <person name="Arias C.F."/>
            <person name="Lopez S."/>
        </authorList>
    </citation>
    <scope>REVIEW</scope>
</reference>
<comment type="function">
    <molecule>Outer capsid protein VP4</molecule>
    <text evidence="1">Spike-forming protein that mediates virion attachment to the host epithelial cell receptors and plays a major role in cell penetration, determination of host range restriction and virulence. Rotavirus attachment and entry into the host cell probably involves multiple sequential contacts between the outer capsid proteins VP4 and VP7, and the cell receptors. It is subsequently lost, together with VP7, following virus entry into the host cell. Following entry into the host cell, low intracellular or intravesicular Ca(2+) concentration probably causes the calcium-stabilized VP7 trimers to dissociate from the virion. This step is probably necessary for the membrane-disrupting entry step and the release of VP4, which is locked onto the virion by VP7. During the virus exit from the host cell, VP4 seems to be required to target the newly formed virions to the host cell lipid rafts.</text>
</comment>
<comment type="function">
    <molecule>Outer capsid protein VP5*</molecule>
    <text evidence="1">Forms the spike 'foot' and 'body' and acts as a membrane permeabilization protein that mediates release of viral particles from endosomal compartments into the cytoplasm. During entry, the part of VP5* that protrudes from the virus folds back on itself and reorganizes from a local dimer to a trimer. This reorganization may be linked to membrane penetration by exposing VP5* hydrophobic region. In integrin-dependent strains, VP5* targets the integrin heterodimer ITGA2/ITGB1 for cell attachment.</text>
</comment>
<comment type="function">
    <molecule>Outer capsid protein VP8*</molecule>
    <text evidence="1">Forms the head of the spikes and mediates the recognition of specific host cell surface glycans. It is the viral hemagglutinin and an important target of neutralizing antibodies. In sialic acid-dependent strains, VP8* binds to host cell sialic acid, most probably a ganglioside, providing the initial contact. In some other strains, VP8* mediates the attachment to histo-blood group antigens (HBGAs) for viral entry.</text>
</comment>
<comment type="subunit">
    <molecule>Outer capsid protein VP4</molecule>
    <text evidence="1">Homotrimer. VP4 adopts a dimeric appearance above the capsid surface, while forming a trimeric base anchored inside the capsid layer. Only hints of the third molecule are observed above the capsid surface. It probably performs a series of molecular rearrangements during viral entry. Prior to trypsin cleavage, it is flexible. The priming trypsin cleavage triggers its rearrangement into rigid spikes with approximate two-fold symmetry of their protruding parts. After an unknown second triggering event, cleaved VP4 may undergo another rearrangement, in which two VP5* subunits fold back on themselves and join a third subunit to form a tightly associated trimer, shaped like a folded umbrella. Interacts with VP6. Interacts with VP7.</text>
</comment>
<comment type="subunit">
    <molecule>Outer capsid protein VP5*</molecule>
    <text evidence="1">Homotrimer. The trimer is coiled-coil stabilized by its C-terminus, however, its N-terminus, known as antigen domain or 'body', seems to be flexible allowing it to self-associate either as a dimer or a trimer.</text>
</comment>
<comment type="subcellular location">
    <molecule>Outer capsid protein VP4</molecule>
    <subcellularLocation>
        <location evidence="1">Virion</location>
    </subcellularLocation>
    <subcellularLocation>
        <location evidence="1">Host rough endoplasmic reticulum</location>
    </subcellularLocation>
    <subcellularLocation>
        <location evidence="1">Host cell membrane</location>
    </subcellularLocation>
    <subcellularLocation>
        <location evidence="1">Host cytoplasm</location>
        <location evidence="1">Host cytoskeleton</location>
    </subcellularLocation>
    <subcellularLocation>
        <location evidence="1">Host endoplasmic reticulum-Golgi intermediate compartment</location>
    </subcellularLocation>
    <text evidence="1">The outer layer contains 180 copies of VP4, grouped as 60 dimers. Immature double-layered particles assembled in the cytoplasm bud across the membrane of the endoplasmic reticulum, acquiring during this process a transient lipid membrane that is modified with the ER resident viral glycoproteins NSP4 and VP7; these enveloped particles also contain VP4. As the particles move towards the interior of the ER cisternae, the transient lipid membrane and the non-structural protein NSP4 are lost, while the virus surface proteins VP4 and VP7 rearrange to form the outermost virus protein layer, yielding mature infectious triple-layered particles. VP4 also seems to associate with lipid rafts of the host cell membrane probably for the exit of the virus from the infected cell by an alternate pathway.</text>
</comment>
<comment type="subcellular location">
    <molecule>Outer capsid protein VP8*</molecule>
    <subcellularLocation>
        <location evidence="1">Virion</location>
    </subcellularLocation>
    <text evidence="1">Outer capsid protein.</text>
</comment>
<comment type="subcellular location">
    <molecule>Outer capsid protein VP5*</molecule>
    <subcellularLocation>
        <location evidence="1">Virion</location>
    </subcellularLocation>
    <text evidence="1">Outer capsid protein.</text>
</comment>
<comment type="domain">
    <molecule>Outer capsid protein VP4</molecule>
    <text evidence="1">The VP4 spike is divided into a foot, a stalk and body, and a head.</text>
</comment>
<comment type="PTM">
    <molecule>Outer capsid protein VP4</molecule>
    <text evidence="1">Proteolytic cleavage by trypsin results in activation of VP4 functions and greatly increases infectivity. The penetration into the host cell is dependent on trypsin treatment of VP4. It produces two peptides, VP5* and VP8* that remain associated with the virion. Cleavage of VP4 by trypsin probably occurs in vivo in the lumen of the intestine prior to infection of enterocytes. Trypsin seems to be incorporated into the three-layered viral particles but remains inactive as long as the viral outer capsid is intact and would only be activated upon the solubilization of the latter.</text>
</comment>
<comment type="miscellaneous">
    <text evidence="2 3">This strain probably does not use sialic acid to attach to the host cell.</text>
</comment>
<comment type="miscellaneous">
    <text evidence="1">In group A rotaviruses, VP4 defines the P serotype.</text>
</comment>
<comment type="miscellaneous">
    <text evidence="1">Some rotavirus strains are neuraminidase-sensitive and require sialic acid to attach to the cell surface. Some rotavirus strains are integrin-dependent. Some rotavirus strains depend on ganglioside for their entry into the host cell. Hsp70 also seems to be involved in the entry of some strains.</text>
</comment>
<comment type="similarity">
    <text evidence="1">Belongs to the rotavirus VP4 family.</text>
</comment>
<proteinExistence type="inferred from homology"/>
<dbReference type="EMBL" id="M22306">
    <property type="protein sequence ID" value="AAA47318.1"/>
    <property type="molecule type" value="Genomic_RNA"/>
</dbReference>
<dbReference type="SMR" id="P12474"/>
<dbReference type="Proteomes" id="UP000008657">
    <property type="component" value="Genome"/>
</dbReference>
<dbReference type="GO" id="GO:0044172">
    <property type="term" value="C:host cell endoplasmic reticulum-Golgi intermediate compartment"/>
    <property type="evidence" value="ECO:0007669"/>
    <property type="project" value="UniProtKB-SubCell"/>
</dbReference>
<dbReference type="GO" id="GO:0020002">
    <property type="term" value="C:host cell plasma membrane"/>
    <property type="evidence" value="ECO:0007669"/>
    <property type="project" value="UniProtKB-SubCell"/>
</dbReference>
<dbReference type="GO" id="GO:0044168">
    <property type="term" value="C:host cell rough endoplasmic reticulum"/>
    <property type="evidence" value="ECO:0007669"/>
    <property type="project" value="UniProtKB-SubCell"/>
</dbReference>
<dbReference type="GO" id="GO:0044163">
    <property type="term" value="C:host cytoskeleton"/>
    <property type="evidence" value="ECO:0007669"/>
    <property type="project" value="UniProtKB-SubCell"/>
</dbReference>
<dbReference type="GO" id="GO:0016020">
    <property type="term" value="C:membrane"/>
    <property type="evidence" value="ECO:0007669"/>
    <property type="project" value="UniProtKB-KW"/>
</dbReference>
<dbReference type="GO" id="GO:0039624">
    <property type="term" value="C:viral outer capsid"/>
    <property type="evidence" value="ECO:0007669"/>
    <property type="project" value="UniProtKB-UniRule"/>
</dbReference>
<dbReference type="GO" id="GO:0039665">
    <property type="term" value="P:permeabilization of host organelle membrane involved in viral entry into host cell"/>
    <property type="evidence" value="ECO:0007669"/>
    <property type="project" value="UniProtKB-UniRule"/>
</dbReference>
<dbReference type="GO" id="GO:0019062">
    <property type="term" value="P:virion attachment to host cell"/>
    <property type="evidence" value="ECO:0007669"/>
    <property type="project" value="UniProtKB-UniRule"/>
</dbReference>
<dbReference type="Gene3D" id="1.20.5.170">
    <property type="match status" value="1"/>
</dbReference>
<dbReference type="Gene3D" id="2.60.120.200">
    <property type="match status" value="1"/>
</dbReference>
<dbReference type="HAMAP" id="MF_04132">
    <property type="entry name" value="Rota_A_VP4"/>
    <property type="match status" value="1"/>
</dbReference>
<dbReference type="HAMAP" id="MF_04125">
    <property type="entry name" value="Rota_VP4"/>
    <property type="match status" value="1"/>
</dbReference>
<dbReference type="InterPro" id="IPR013320">
    <property type="entry name" value="ConA-like_dom_sf"/>
</dbReference>
<dbReference type="InterPro" id="IPR042546">
    <property type="entry name" value="Rota_A_VP4"/>
</dbReference>
<dbReference type="InterPro" id="IPR035330">
    <property type="entry name" value="Rota_VP4_MID"/>
</dbReference>
<dbReference type="InterPro" id="IPR038017">
    <property type="entry name" value="Rota_VP4_MID_sf"/>
</dbReference>
<dbReference type="InterPro" id="IPR000416">
    <property type="entry name" value="VP4_concanavalin-like"/>
</dbReference>
<dbReference type="InterPro" id="IPR035329">
    <property type="entry name" value="VP4_helical"/>
</dbReference>
<dbReference type="Pfam" id="PF17477">
    <property type="entry name" value="Rota_VP4_MID"/>
    <property type="match status" value="1"/>
</dbReference>
<dbReference type="Pfam" id="PF00426">
    <property type="entry name" value="VP4_haemagglut"/>
    <property type="match status" value="1"/>
</dbReference>
<dbReference type="Pfam" id="PF17478">
    <property type="entry name" value="VP4_helical"/>
    <property type="match status" value="1"/>
</dbReference>
<dbReference type="SUPFAM" id="SSF49899">
    <property type="entry name" value="Concanavalin A-like lectins/glucanases"/>
    <property type="match status" value="1"/>
</dbReference>
<dbReference type="SUPFAM" id="SSF111379">
    <property type="entry name" value="VP4 membrane interaction domain"/>
    <property type="match status" value="1"/>
</dbReference>